<protein>
    <recommendedName>
        <fullName evidence="1">Large ribosomal subunit protein uL1</fullName>
    </recommendedName>
    <alternativeName>
        <fullName evidence="2">50S ribosomal protein L1</fullName>
    </alternativeName>
</protein>
<accession>A6X0A6</accession>
<name>RL1_BRUA4</name>
<sequence>MAKISKRINKIREGVDRNKLYDLSAAIGLVKERAVAKFDETIEIAMNLGVDPRHADQMVRGVVNLPNGTGRTVRVAVFARGDKAEEAKKAGADIVGAEELFEIVNGGKIDFDRCIATPDMMPLVGRLGKVLGPRGMMPNPKVGTVTTDVAAAVAASKGGAVEFRVEKAGIIHAGIGKVSFDNAKLEENIKAFADAVIKAKPSAAKGEYVKRVSLSSTMGVGVKVDPATVKVVA</sequence>
<gene>
    <name evidence="1" type="primary">rplA</name>
    <name type="ordered locus">Oant_1944</name>
</gene>
<dbReference type="EMBL" id="CP000758">
    <property type="protein sequence ID" value="ABS14660.1"/>
    <property type="molecule type" value="Genomic_DNA"/>
</dbReference>
<dbReference type="RefSeq" id="WP_010659904.1">
    <property type="nucleotide sequence ID" value="NC_009667.1"/>
</dbReference>
<dbReference type="SMR" id="A6X0A6"/>
<dbReference type="STRING" id="439375.Oant_1944"/>
<dbReference type="GeneID" id="61317597"/>
<dbReference type="KEGG" id="oan:Oant_1944"/>
<dbReference type="eggNOG" id="COG0081">
    <property type="taxonomic scope" value="Bacteria"/>
</dbReference>
<dbReference type="HOGENOM" id="CLU_062853_0_0_5"/>
<dbReference type="PhylomeDB" id="A6X0A6"/>
<dbReference type="Proteomes" id="UP000002301">
    <property type="component" value="Chromosome 1"/>
</dbReference>
<dbReference type="GO" id="GO:0022625">
    <property type="term" value="C:cytosolic large ribosomal subunit"/>
    <property type="evidence" value="ECO:0007669"/>
    <property type="project" value="TreeGrafter"/>
</dbReference>
<dbReference type="GO" id="GO:0019843">
    <property type="term" value="F:rRNA binding"/>
    <property type="evidence" value="ECO:0007669"/>
    <property type="project" value="UniProtKB-UniRule"/>
</dbReference>
<dbReference type="GO" id="GO:0003735">
    <property type="term" value="F:structural constituent of ribosome"/>
    <property type="evidence" value="ECO:0007669"/>
    <property type="project" value="InterPro"/>
</dbReference>
<dbReference type="GO" id="GO:0000049">
    <property type="term" value="F:tRNA binding"/>
    <property type="evidence" value="ECO:0007669"/>
    <property type="project" value="UniProtKB-KW"/>
</dbReference>
<dbReference type="GO" id="GO:0006417">
    <property type="term" value="P:regulation of translation"/>
    <property type="evidence" value="ECO:0007669"/>
    <property type="project" value="UniProtKB-KW"/>
</dbReference>
<dbReference type="GO" id="GO:0006412">
    <property type="term" value="P:translation"/>
    <property type="evidence" value="ECO:0007669"/>
    <property type="project" value="UniProtKB-UniRule"/>
</dbReference>
<dbReference type="CDD" id="cd00403">
    <property type="entry name" value="Ribosomal_L1"/>
    <property type="match status" value="1"/>
</dbReference>
<dbReference type="FunFam" id="3.40.50.790:FF:000001">
    <property type="entry name" value="50S ribosomal protein L1"/>
    <property type="match status" value="1"/>
</dbReference>
<dbReference type="Gene3D" id="3.30.190.20">
    <property type="match status" value="1"/>
</dbReference>
<dbReference type="Gene3D" id="3.40.50.790">
    <property type="match status" value="1"/>
</dbReference>
<dbReference type="HAMAP" id="MF_01318_B">
    <property type="entry name" value="Ribosomal_uL1_B"/>
    <property type="match status" value="1"/>
</dbReference>
<dbReference type="InterPro" id="IPR005878">
    <property type="entry name" value="Ribosom_uL1_bac-type"/>
</dbReference>
<dbReference type="InterPro" id="IPR002143">
    <property type="entry name" value="Ribosomal_uL1"/>
</dbReference>
<dbReference type="InterPro" id="IPR023674">
    <property type="entry name" value="Ribosomal_uL1-like"/>
</dbReference>
<dbReference type="InterPro" id="IPR028364">
    <property type="entry name" value="Ribosomal_uL1/biogenesis"/>
</dbReference>
<dbReference type="InterPro" id="IPR016095">
    <property type="entry name" value="Ribosomal_uL1_3-a/b-sand"/>
</dbReference>
<dbReference type="InterPro" id="IPR023673">
    <property type="entry name" value="Ribosomal_uL1_CS"/>
</dbReference>
<dbReference type="NCBIfam" id="TIGR01169">
    <property type="entry name" value="rplA_bact"/>
    <property type="match status" value="1"/>
</dbReference>
<dbReference type="PANTHER" id="PTHR36427">
    <property type="entry name" value="54S RIBOSOMAL PROTEIN L1, MITOCHONDRIAL"/>
    <property type="match status" value="1"/>
</dbReference>
<dbReference type="PANTHER" id="PTHR36427:SF3">
    <property type="entry name" value="LARGE RIBOSOMAL SUBUNIT PROTEIN UL1M"/>
    <property type="match status" value="1"/>
</dbReference>
<dbReference type="Pfam" id="PF00687">
    <property type="entry name" value="Ribosomal_L1"/>
    <property type="match status" value="1"/>
</dbReference>
<dbReference type="PIRSF" id="PIRSF002155">
    <property type="entry name" value="Ribosomal_L1"/>
    <property type="match status" value="1"/>
</dbReference>
<dbReference type="SUPFAM" id="SSF56808">
    <property type="entry name" value="Ribosomal protein L1"/>
    <property type="match status" value="1"/>
</dbReference>
<dbReference type="PROSITE" id="PS01199">
    <property type="entry name" value="RIBOSOMAL_L1"/>
    <property type="match status" value="1"/>
</dbReference>
<evidence type="ECO:0000255" key="1">
    <source>
        <dbReference type="HAMAP-Rule" id="MF_01318"/>
    </source>
</evidence>
<evidence type="ECO:0000305" key="2"/>
<organism>
    <name type="scientific">Brucella anthropi (strain ATCC 49188 / DSM 6882 / CCUG 24695 / JCM 21032 / LMG 3331 / NBRC 15819 / NCTC 12168 / Alc 37)</name>
    <name type="common">Ochrobactrum anthropi</name>
    <dbReference type="NCBI Taxonomy" id="439375"/>
    <lineage>
        <taxon>Bacteria</taxon>
        <taxon>Pseudomonadati</taxon>
        <taxon>Pseudomonadota</taxon>
        <taxon>Alphaproteobacteria</taxon>
        <taxon>Hyphomicrobiales</taxon>
        <taxon>Brucellaceae</taxon>
        <taxon>Brucella/Ochrobactrum group</taxon>
        <taxon>Brucella</taxon>
    </lineage>
</organism>
<proteinExistence type="inferred from homology"/>
<keyword id="KW-1185">Reference proteome</keyword>
<keyword id="KW-0678">Repressor</keyword>
<keyword id="KW-0687">Ribonucleoprotein</keyword>
<keyword id="KW-0689">Ribosomal protein</keyword>
<keyword id="KW-0694">RNA-binding</keyword>
<keyword id="KW-0699">rRNA-binding</keyword>
<keyword id="KW-0810">Translation regulation</keyword>
<keyword id="KW-0820">tRNA-binding</keyword>
<reference key="1">
    <citation type="journal article" date="2011" name="J. Bacteriol.">
        <title>Genome of Ochrobactrum anthropi ATCC 49188 T, a versatile opportunistic pathogen and symbiont of several eukaryotic hosts.</title>
        <authorList>
            <person name="Chain P.S."/>
            <person name="Lang D.M."/>
            <person name="Comerci D.J."/>
            <person name="Malfatti S.A."/>
            <person name="Vergez L.M."/>
            <person name="Shin M."/>
            <person name="Ugalde R.A."/>
            <person name="Garcia E."/>
            <person name="Tolmasky M.E."/>
        </authorList>
    </citation>
    <scope>NUCLEOTIDE SEQUENCE [LARGE SCALE GENOMIC DNA]</scope>
    <source>
        <strain>ATCC 49188 / DSM 6882 / CCUG 24695 / JCM 21032 / LMG 3331 / NBRC 15819 / NCTC 12168 / Alc 37</strain>
    </source>
</reference>
<comment type="function">
    <text evidence="1">Binds directly to 23S rRNA. The L1 stalk is quite mobile in the ribosome, and is involved in E site tRNA release.</text>
</comment>
<comment type="function">
    <text evidence="1">Protein L1 is also a translational repressor protein, it controls the translation of the L11 operon by binding to its mRNA.</text>
</comment>
<comment type="subunit">
    <text evidence="1">Part of the 50S ribosomal subunit.</text>
</comment>
<comment type="similarity">
    <text evidence="1">Belongs to the universal ribosomal protein uL1 family.</text>
</comment>
<feature type="chain" id="PRO_1000051912" description="Large ribosomal subunit protein uL1">
    <location>
        <begin position="1"/>
        <end position="233"/>
    </location>
</feature>